<protein>
    <recommendedName>
        <fullName evidence="6">Ubiquitin-ribosomal protein eL40 fusion protein</fullName>
    </recommendedName>
    <alternativeName>
        <fullName>Ubiquitin A-52 residue ribosomal protein fusion product 1</fullName>
    </alternativeName>
    <component>
        <recommendedName>
            <fullName>Ubiquitin</fullName>
        </recommendedName>
    </component>
    <component>
        <recommendedName>
            <fullName evidence="6">Large ribosomal subunit protein eL40</fullName>
        </recommendedName>
        <alternativeName>
            <fullName>60S ribosomal protein L40</fullName>
        </alternativeName>
        <alternativeName>
            <fullName>CEP52</fullName>
        </alternativeName>
    </component>
</protein>
<name>RL40_PONPY</name>
<proteinExistence type="evidence at transcript level"/>
<gene>
    <name type="primary">UBA52</name>
    <name type="synonym">UBCEP2</name>
</gene>
<organism>
    <name type="scientific">Pongo pygmaeus</name>
    <name type="common">Bornean orangutan</name>
    <dbReference type="NCBI Taxonomy" id="9600"/>
    <lineage>
        <taxon>Eukaryota</taxon>
        <taxon>Metazoa</taxon>
        <taxon>Chordata</taxon>
        <taxon>Craniata</taxon>
        <taxon>Vertebrata</taxon>
        <taxon>Euteleostomi</taxon>
        <taxon>Mammalia</taxon>
        <taxon>Eutheria</taxon>
        <taxon>Euarchontoglires</taxon>
        <taxon>Primates</taxon>
        <taxon>Haplorrhini</taxon>
        <taxon>Catarrhini</taxon>
        <taxon>Hominidae</taxon>
        <taxon>Pongo</taxon>
    </lineage>
</organism>
<dbReference type="EMBL" id="CR857299">
    <property type="protein sequence ID" value="CAH89595.1"/>
    <property type="molecule type" value="mRNA"/>
</dbReference>
<dbReference type="RefSeq" id="XP_054322316.1">
    <property type="nucleotide sequence ID" value="XM_054466341.2"/>
</dbReference>
<dbReference type="RefSeq" id="XP_054322317.1">
    <property type="nucleotide sequence ID" value="XM_054466342.2"/>
</dbReference>
<dbReference type="RefSeq" id="XP_054322318.1">
    <property type="nucleotide sequence ID" value="XM_054466343.1"/>
</dbReference>
<dbReference type="RefSeq" id="XP_054322319.1">
    <property type="nucleotide sequence ID" value="XM_054466344.2"/>
</dbReference>
<dbReference type="BMRB" id="P0C275"/>
<dbReference type="SMR" id="P0C275"/>
<dbReference type="GeneID" id="129021191"/>
<dbReference type="KEGG" id="pon:100171555"/>
<dbReference type="GO" id="GO:0005737">
    <property type="term" value="C:cytoplasm"/>
    <property type="evidence" value="ECO:0007669"/>
    <property type="project" value="UniProtKB-SubCell"/>
</dbReference>
<dbReference type="GO" id="GO:0005634">
    <property type="term" value="C:nucleus"/>
    <property type="evidence" value="ECO:0007669"/>
    <property type="project" value="UniProtKB-SubCell"/>
</dbReference>
<dbReference type="GO" id="GO:1990904">
    <property type="term" value="C:ribonucleoprotein complex"/>
    <property type="evidence" value="ECO:0007669"/>
    <property type="project" value="UniProtKB-KW"/>
</dbReference>
<dbReference type="GO" id="GO:0005840">
    <property type="term" value="C:ribosome"/>
    <property type="evidence" value="ECO:0007669"/>
    <property type="project" value="UniProtKB-KW"/>
</dbReference>
<dbReference type="GO" id="GO:0003735">
    <property type="term" value="F:structural constituent of ribosome"/>
    <property type="evidence" value="ECO:0007669"/>
    <property type="project" value="InterPro"/>
</dbReference>
<dbReference type="GO" id="GO:0006412">
    <property type="term" value="P:translation"/>
    <property type="evidence" value="ECO:0007669"/>
    <property type="project" value="InterPro"/>
</dbReference>
<dbReference type="CDD" id="cd01803">
    <property type="entry name" value="Ubl_ubiquitin"/>
    <property type="match status" value="1"/>
</dbReference>
<dbReference type="FunFam" id="3.10.20.90:FF:000014">
    <property type="entry name" value="Ubiquitin-60S ribosomal L40 fusion"/>
    <property type="match status" value="1"/>
</dbReference>
<dbReference type="FunFam" id="4.10.1060.50:FF:000001">
    <property type="entry name" value="ubiquitin-60S ribosomal protein L40"/>
    <property type="match status" value="1"/>
</dbReference>
<dbReference type="Gene3D" id="4.10.1060.50">
    <property type="match status" value="1"/>
</dbReference>
<dbReference type="Gene3D" id="3.10.20.90">
    <property type="entry name" value="Phosphatidylinositol 3-kinase Catalytic Subunit, Chain A, domain 1"/>
    <property type="match status" value="1"/>
</dbReference>
<dbReference type="InterPro" id="IPR001975">
    <property type="entry name" value="Ribosomal_eL40_dom"/>
</dbReference>
<dbReference type="InterPro" id="IPR038587">
    <property type="entry name" value="Ribosomal_eL40_sf"/>
</dbReference>
<dbReference type="InterPro" id="IPR000626">
    <property type="entry name" value="Ubiquitin-like_dom"/>
</dbReference>
<dbReference type="InterPro" id="IPR029071">
    <property type="entry name" value="Ubiquitin-like_domsf"/>
</dbReference>
<dbReference type="InterPro" id="IPR019954">
    <property type="entry name" value="Ubiquitin_CS"/>
</dbReference>
<dbReference type="InterPro" id="IPR019956">
    <property type="entry name" value="Ubiquitin_dom"/>
</dbReference>
<dbReference type="InterPro" id="IPR050158">
    <property type="entry name" value="Ubiquitin_ubiquitin-like"/>
</dbReference>
<dbReference type="PANTHER" id="PTHR10666">
    <property type="entry name" value="UBIQUITIN"/>
    <property type="match status" value="1"/>
</dbReference>
<dbReference type="Pfam" id="PF01020">
    <property type="entry name" value="Ribosomal_L40e"/>
    <property type="match status" value="1"/>
</dbReference>
<dbReference type="Pfam" id="PF00240">
    <property type="entry name" value="ubiquitin"/>
    <property type="match status" value="1"/>
</dbReference>
<dbReference type="PRINTS" id="PR00348">
    <property type="entry name" value="UBIQUITIN"/>
</dbReference>
<dbReference type="SMART" id="SM01377">
    <property type="entry name" value="Ribosomal_L40e"/>
    <property type="match status" value="1"/>
</dbReference>
<dbReference type="SMART" id="SM00213">
    <property type="entry name" value="UBQ"/>
    <property type="match status" value="1"/>
</dbReference>
<dbReference type="SUPFAM" id="SSF54236">
    <property type="entry name" value="Ubiquitin-like"/>
    <property type="match status" value="1"/>
</dbReference>
<dbReference type="PROSITE" id="PS00299">
    <property type="entry name" value="UBIQUITIN_1"/>
    <property type="match status" value="1"/>
</dbReference>
<dbReference type="PROSITE" id="PS50053">
    <property type="entry name" value="UBIQUITIN_2"/>
    <property type="match status" value="1"/>
</dbReference>
<sequence>MQIFVKTLTGKTITLEVEPSDTIENVKAKIQDKEGIPPDQQRLIFAGKQLEDGRTLSDYNIQKESTLHLVLRLRGGIIEPSLRQLAQKYNCDKMICRKCYARLHPRAVNCRKKKCGHTNNLRPKKKVK</sequence>
<keyword id="KW-0013">ADP-ribosylation</keyword>
<keyword id="KW-0963">Cytoplasm</keyword>
<keyword id="KW-1017">Isopeptide bond</keyword>
<keyword id="KW-0488">Methylation</keyword>
<keyword id="KW-0539">Nucleus</keyword>
<keyword id="KW-0597">Phosphoprotein</keyword>
<keyword id="KW-0687">Ribonucleoprotein</keyword>
<keyword id="KW-0689">Ribosomal protein</keyword>
<keyword id="KW-0832">Ubl conjugation</keyword>
<accession>P0C275</accession>
<accession>Q5RF62</accession>
<accession>Q867C4</accession>
<accession>Q867C5</accession>
<evidence type="ECO:0000250" key="1"/>
<evidence type="ECO:0000250" key="2">
    <source>
        <dbReference type="UniProtKB" id="P62984"/>
    </source>
</evidence>
<evidence type="ECO:0000250" key="3">
    <source>
        <dbReference type="UniProtKB" id="P62986"/>
    </source>
</evidence>
<evidence type="ECO:0000250" key="4">
    <source>
        <dbReference type="UniProtKB" id="P62987"/>
    </source>
</evidence>
<evidence type="ECO:0000255" key="5">
    <source>
        <dbReference type="PROSITE-ProRule" id="PRU00214"/>
    </source>
</evidence>
<evidence type="ECO:0000305" key="6"/>
<comment type="function">
    <molecule>Ubiquitin</molecule>
    <text evidence="4">Exists either covalently attached to another protein, or free (unanchored). When covalently bound, it is conjugated to target proteins via an isopeptide bond either as a monomer (monoubiquitin), a polymer linked via different Lys residues of the ubiquitin (polyubiquitin chains) or a linear polymer linked via the initiator Met of the ubiquitin (linear polyubiquitin chains). Polyubiquitin chains, when attached to a target protein, have different functions depending on the Lys residue of the ubiquitin that is linked: Lys-6-linked may be involved in DNA repair; Lys-11-linked is involved in ERAD (endoplasmic reticulum-associated degradation) and in cell-cycle regulation; Lys-29-linked is involved in proteotoxic stress response and cell cycle; Lys-33-linked is involved in kinase modification; Lys-48-linked is involved in protein degradation via the proteasome; Lys-63-linked is involved in endocytosis, DNA-damage responses as well as in signaling processes leading to activation of the transcription factor NF-kappa-B. Linear polymer chains formed via attachment by the initiator Met lead to cell signaling. Ubiquitin is usually conjugated to Lys residues of target proteins, however, in rare cases, conjugation to Cys or Ser residues has been observed. When polyubiquitin is free (unanchored-polyubiquitin), it also has distinct roles, such as in activation of protein kinases, and in signaling.</text>
</comment>
<comment type="function">
    <molecule>Large ribosomal subunit protein eL40</molecule>
    <text evidence="4">Component of the 60S subunit of the ribosome. Ribosomal protein L40 is essential for translation of a subset of cellular transcripts, and especially for cap-dependent translation of vesicular stomatitis virus mRNAs.</text>
</comment>
<comment type="subunit">
    <molecule>Large ribosomal subunit protein eL40</molecule>
    <text evidence="4">Part of the 60S ribosomal subunit. Interacts with UBQLN1 (via UBA domain).</text>
</comment>
<comment type="subcellular location">
    <molecule>Ubiquitin</molecule>
    <subcellularLocation>
        <location evidence="1">Cytoplasm</location>
    </subcellularLocation>
    <subcellularLocation>
        <location evidence="1">Nucleus</location>
    </subcellularLocation>
</comment>
<comment type="subcellular location">
    <molecule>Large ribosomal subunit protein eL40</molecule>
    <subcellularLocation>
        <location evidence="2">Cytoplasm</location>
    </subcellularLocation>
</comment>
<comment type="PTM">
    <molecule>Ubiquitin</molecule>
    <text evidence="4">Phosphorylated at Ser-65 by PINK1 during mitophagy. Phosphorylated ubiquitin specifically binds and activates parkin (PRKN), triggering mitophagy. Phosphorylation does not affect E1-mediated E2 charging of ubiquitin but affects discharging of E2 enzymes to form polyubiquitin chains. It also affects deubiquitination by deubiquitinase enzymes such as USP30.</text>
</comment>
<comment type="PTM">
    <molecule>Ubiquitin</molecule>
    <text evidence="4">Mono-ADP-ribosylated at the C-terminus by PARP9, a component of the PPAR9-DTX3L complex. ADP-ribosylation requires processing by E1 and E2 enzymes and prevents ubiquitin conjugation to substrates such as histones.</text>
</comment>
<comment type="PTM">
    <molecule>Large ribosomal subunit protein eL40</molecule>
    <text evidence="4">Trimethylation of Lys-98 ('Lys-22' of the mature chain) by SMYD5 promotes translation elongation and protein synthesis.</text>
</comment>
<comment type="miscellaneous">
    <text>Ubiquitin is encoded by 4 different genes. Uba52 and Rps27a genes code for a single copy of ubiquitin fused to the ribosomal proteins eL40 and eS31, respectively. UBB and UBC genes code for a polyubiquitin precursor with exact head to tail repeats, the number of repeats differ between species and strains.</text>
</comment>
<comment type="similarity">
    <text evidence="6">In the N-terminal section; belongs to the ubiquitin family.</text>
</comment>
<comment type="similarity">
    <text evidence="6">In the C-terminal section; belongs to the eukaryotic ribosomal protein eL40 family.</text>
</comment>
<reference key="1">
    <citation type="submission" date="2004-11" db="EMBL/GenBank/DDBJ databases">
        <authorList>
            <consortium name="The German cDNA consortium"/>
        </authorList>
    </citation>
    <scope>NUCLEOTIDE SEQUENCE [LARGE SCALE MRNA]</scope>
    <source>
        <tissue>Kidney</tissue>
    </source>
</reference>
<feature type="chain" id="PRO_0000396438" description="Ubiquitin">
    <location>
        <begin position="1"/>
        <end position="76"/>
    </location>
</feature>
<feature type="chain" id="PRO_0000265744" description="Large ribosomal subunit protein eL40">
    <location>
        <begin position="77"/>
        <end position="128"/>
    </location>
</feature>
<feature type="domain" description="Ubiquitin-like" evidence="5">
    <location>
        <begin position="1"/>
        <end position="76"/>
    </location>
</feature>
<feature type="site" description="Interacts with activating enzyme">
    <location>
        <position position="54"/>
    </location>
</feature>
<feature type="site" description="Essential for function">
    <location>
        <position position="68"/>
    </location>
</feature>
<feature type="site" description="Interacts with activating enzyme">
    <location>
        <position position="72"/>
    </location>
</feature>
<feature type="modified residue" description="Phosphoserine; by PINK1" evidence="4">
    <location>
        <position position="65"/>
    </location>
</feature>
<feature type="modified residue" description="ADP-ribosylglycine" evidence="4">
    <location>
        <position position="76"/>
    </location>
</feature>
<feature type="modified residue" description="N6,N6,N6-trimethyllysine" evidence="3">
    <location>
        <position position="98"/>
    </location>
</feature>
<feature type="cross-link" description="Glycyl lysine isopeptide (Lys-Gly) (interchain with G-Cter in ubiquitin)" evidence="4">
    <location>
        <position position="6"/>
    </location>
</feature>
<feature type="cross-link" description="Glycyl lysine isopeptide (Lys-Gly) (interchain with G-Cter in ubiquitin)" evidence="4">
    <location>
        <position position="11"/>
    </location>
</feature>
<feature type="cross-link" description="Glycyl lysine isopeptide (Lys-Gly) (interchain with G-Cter in ubiquitin)" evidence="4">
    <location>
        <position position="27"/>
    </location>
</feature>
<feature type="cross-link" description="Glycyl lysine isopeptide (Lys-Gly) (interchain with G-Cter in ubiquitin)" evidence="4">
    <location>
        <position position="29"/>
    </location>
</feature>
<feature type="cross-link" description="Glycyl lysine isopeptide (Lys-Gly) (interchain with G-Cter in ubiquitin)" evidence="4">
    <location>
        <position position="33"/>
    </location>
</feature>
<feature type="cross-link" description="Glycyl lysine isopeptide (Lys-Gly) (interchain with G-Cter in ubiquitin)" evidence="4">
    <location>
        <position position="48"/>
    </location>
</feature>
<feature type="cross-link" description="Glycyl lysine isopeptide (Lys-Gly) (interchain with G-Cter in ubiquitin)" evidence="4">
    <location>
        <position position="63"/>
    </location>
</feature>
<feature type="cross-link" description="Glycyl lysine isopeptide (Gly-Lys) (interchain with K-? in acceptor proteins)" evidence="5">
    <location>
        <position position="76"/>
    </location>
</feature>